<accession>Q7T2I5</accession>
<accession>P01435</accession>
<feature type="signal peptide" evidence="2">
    <location>
        <begin position="1"/>
        <end position="21"/>
    </location>
</feature>
<feature type="chain" id="PRO_0000035448" description="Erabutoxin c" evidence="2">
    <location>
        <begin position="22"/>
        <end position="83"/>
    </location>
</feature>
<feature type="region of interest" description="Loop I" evidence="1">
    <location>
        <begin position="24"/>
        <end position="38"/>
    </location>
</feature>
<feature type="region of interest" description="Stretch between loop I and loop II" evidence="1">
    <location>
        <begin position="39"/>
        <end position="44"/>
    </location>
</feature>
<feature type="region of interest" description="Loop II" evidence="1">
    <location>
        <begin position="45"/>
        <end position="62"/>
    </location>
</feature>
<feature type="region of interest" description="Loop III" evidence="1">
    <location>
        <begin position="64"/>
        <end position="75"/>
    </location>
</feature>
<feature type="site" description="Moderately important residue for binding to acetylcholine receptor" evidence="1">
    <location>
        <position position="27"/>
    </location>
</feature>
<feature type="site" description="Very important residue for binding to acetylcholine receptor" evidence="1">
    <location>
        <position position="28"/>
    </location>
</feature>
<feature type="site" description="Key residue for binding to acetylcholine receptor" evidence="1">
    <location>
        <position position="29"/>
    </location>
</feature>
<feature type="site" description="Moderately important residue for binding to acetylcholine receptor" evidence="1">
    <location>
        <position position="30"/>
    </location>
</feature>
<feature type="site" description="Key residue for binding to acetylcholine receptor" evidence="1">
    <location>
        <position position="31"/>
    </location>
</feature>
<feature type="site" description="Moderately important residue for binding to acetylcholine receptor" evidence="1">
    <location>
        <position position="46"/>
    </location>
</feature>
<feature type="site" description="Key residue for binding to acetylcholine receptor" evidence="1">
    <location>
        <position position="48"/>
    </location>
</feature>
<feature type="site" description="Very important residue for binding to acetylcholine receptor" evidence="1">
    <location>
        <position position="50"/>
    </location>
</feature>
<feature type="site" description="Very important residue for binding to acetylcholine receptor" evidence="1">
    <location>
        <position position="52"/>
    </location>
</feature>
<feature type="site" description="Moderately important residue for binding to acetylcholine receptor" evidence="1">
    <location>
        <position position="53"/>
    </location>
</feature>
<feature type="site" description="Key residue for binding to acetylcholine receptor" evidence="1">
    <location>
        <position position="54"/>
    </location>
</feature>
<feature type="site" description="Moderately important residue for binding to acetylcholine receptor" evidence="1">
    <location>
        <position position="55"/>
    </location>
</feature>
<feature type="site" description="Very important residue for binding to acetylcholine receptor" evidence="1">
    <location>
        <position position="57"/>
    </location>
</feature>
<feature type="site" description="Very important residue for binding to acetylcholine receptor" evidence="1">
    <location>
        <position position="59"/>
    </location>
</feature>
<feature type="site" description="Very important residue for binding to acetylcholine receptor" evidence="1">
    <location>
        <position position="68"/>
    </location>
</feature>
<feature type="disulfide bond" evidence="7">
    <location>
        <begin position="24"/>
        <end position="45"/>
    </location>
</feature>
<feature type="disulfide bond" evidence="7">
    <location>
        <begin position="38"/>
        <end position="62"/>
    </location>
</feature>
<feature type="disulfide bond" evidence="7">
    <location>
        <begin position="64"/>
        <end position="75"/>
    </location>
</feature>
<feature type="disulfide bond" evidence="7">
    <location>
        <begin position="76"/>
        <end position="81"/>
    </location>
</feature>
<feature type="strand" evidence="8">
    <location>
        <begin position="23"/>
        <end position="25"/>
    </location>
</feature>
<feature type="strand" evidence="8">
    <location>
        <begin position="35"/>
        <end position="37"/>
    </location>
</feature>
<feature type="strand" evidence="8">
    <location>
        <begin position="45"/>
        <end position="52"/>
    </location>
</feature>
<feature type="strand" evidence="8">
    <location>
        <begin position="55"/>
        <end position="63"/>
    </location>
</feature>
<feature type="strand" evidence="8">
    <location>
        <begin position="72"/>
        <end position="76"/>
    </location>
</feature>
<proteinExistence type="evidence at protein level"/>
<sequence length="83" mass="9146">MKTLLLTLVVVTIVCLDLGYTRICFNHQSSQPQTTKTCSPGESSCYHKQWSDFRGTIIERGCGCPTVKPGINLSCCESEVCNN</sequence>
<comment type="function">
    <text evidence="3">Binds to muscle nicotinic acetylcholine receptor (nAChR) and inhibit acetylcholine from binding to the receptor, thereby impairing neuromuscular transmission. Binds to Torpedo marmorata nAChR (Kd=0.14 nM) (PubMed:7721859).</text>
</comment>
<comment type="subcellular location">
    <subcellularLocation>
        <location evidence="2">Secreted</location>
    </subcellularLocation>
</comment>
<comment type="tissue specificity">
    <text evidence="6">Expressed by the venom gland.</text>
</comment>
<comment type="toxic dose">
    <text evidence="2">LD(50) is 0.15 mg/kg by intramuscular injection into mice.</text>
</comment>
<comment type="similarity">
    <text evidence="5">Belongs to the three-finger toxin family. Short-chain subfamily. Type I alpha-neurotoxin sub-subfamily.</text>
</comment>
<evidence type="ECO:0000250" key="1">
    <source>
        <dbReference type="UniProtKB" id="P60775"/>
    </source>
</evidence>
<evidence type="ECO:0000269" key="2">
    <source>
    </source>
</evidence>
<evidence type="ECO:0000269" key="3">
    <source>
    </source>
</evidence>
<evidence type="ECO:0000303" key="4">
    <source>
    </source>
</evidence>
<evidence type="ECO:0000305" key="5"/>
<evidence type="ECO:0000305" key="6">
    <source>
    </source>
</evidence>
<evidence type="ECO:0007744" key="7">
    <source>
        <dbReference type="PDB" id="6PNW"/>
    </source>
</evidence>
<evidence type="ECO:0007829" key="8">
    <source>
        <dbReference type="PDB" id="6PNW"/>
    </source>
</evidence>
<dbReference type="EMBL" id="X51410">
    <property type="protein sequence ID" value="CAA35770.1"/>
    <property type="molecule type" value="Genomic_DNA"/>
</dbReference>
<dbReference type="EMBL" id="AB098530">
    <property type="protein sequence ID" value="BAC78203.1"/>
    <property type="molecule type" value="Genomic_DNA"/>
</dbReference>
<dbReference type="PIR" id="S14003">
    <property type="entry name" value="S14003"/>
</dbReference>
<dbReference type="PDB" id="6PNW">
    <property type="method" value="X-ray"/>
    <property type="resolution" value="2.00 A"/>
    <property type="chains" value="A/B=22-83"/>
</dbReference>
<dbReference type="PDBsum" id="6PNW"/>
<dbReference type="BMRB" id="Q7T2I5"/>
<dbReference type="SMR" id="Q7T2I5"/>
<dbReference type="GO" id="GO:0005576">
    <property type="term" value="C:extracellular region"/>
    <property type="evidence" value="ECO:0007669"/>
    <property type="project" value="UniProtKB-SubCell"/>
</dbReference>
<dbReference type="GO" id="GO:0030550">
    <property type="term" value="F:acetylcholine receptor inhibitor activity"/>
    <property type="evidence" value="ECO:0007669"/>
    <property type="project" value="UniProtKB-KW"/>
</dbReference>
<dbReference type="GO" id="GO:0099106">
    <property type="term" value="F:ion channel regulator activity"/>
    <property type="evidence" value="ECO:0007669"/>
    <property type="project" value="UniProtKB-KW"/>
</dbReference>
<dbReference type="GO" id="GO:0090729">
    <property type="term" value="F:toxin activity"/>
    <property type="evidence" value="ECO:0007669"/>
    <property type="project" value="UniProtKB-KW"/>
</dbReference>
<dbReference type="CDD" id="cd00206">
    <property type="entry name" value="TFP_snake_toxin"/>
    <property type="match status" value="1"/>
</dbReference>
<dbReference type="FunFam" id="2.10.60.10:FF:000024">
    <property type="entry name" value="Cytotoxin 1"/>
    <property type="match status" value="1"/>
</dbReference>
<dbReference type="Gene3D" id="2.10.60.10">
    <property type="entry name" value="CD59"/>
    <property type="match status" value="1"/>
</dbReference>
<dbReference type="InterPro" id="IPR003571">
    <property type="entry name" value="Snake_3FTx"/>
</dbReference>
<dbReference type="InterPro" id="IPR045860">
    <property type="entry name" value="Snake_toxin-like_sf"/>
</dbReference>
<dbReference type="InterPro" id="IPR018354">
    <property type="entry name" value="Snake_toxin_con_site"/>
</dbReference>
<dbReference type="InterPro" id="IPR054131">
    <property type="entry name" value="Toxin_cobra-type"/>
</dbReference>
<dbReference type="Pfam" id="PF21947">
    <property type="entry name" value="Toxin_cobra-type"/>
    <property type="match status" value="1"/>
</dbReference>
<dbReference type="SUPFAM" id="SSF57302">
    <property type="entry name" value="Snake toxin-like"/>
    <property type="match status" value="1"/>
</dbReference>
<dbReference type="PROSITE" id="PS00272">
    <property type="entry name" value="SNAKE_TOXIN"/>
    <property type="match status" value="1"/>
</dbReference>
<keyword id="KW-0002">3D-structure</keyword>
<keyword id="KW-0008">Acetylcholine receptor inhibiting toxin</keyword>
<keyword id="KW-0903">Direct protein sequencing</keyword>
<keyword id="KW-1015">Disulfide bond</keyword>
<keyword id="KW-0872">Ion channel impairing toxin</keyword>
<keyword id="KW-0528">Neurotoxin</keyword>
<keyword id="KW-0629">Postsynaptic neurotoxin</keyword>
<keyword id="KW-0964">Secreted</keyword>
<keyword id="KW-0732">Signal</keyword>
<keyword id="KW-0800">Toxin</keyword>
<reference key="1">
    <citation type="journal article" date="1990" name="Eur. J. Biochem.">
        <title>Structure of the snake short-chain neurotoxin, erabutoxin c, precursor gene.</title>
        <authorList>
            <person name="Fuse N."/>
            <person name="Tsuchiya T."/>
            <person name="Nonomura Y."/>
            <person name="Menez A."/>
            <person name="Tamiya T."/>
        </authorList>
    </citation>
    <scope>NUCLEOTIDE SEQUENCE [GENOMIC DNA]</scope>
    <source>
        <tissue>Liver</tissue>
    </source>
</reference>
<reference key="2">
    <citation type="journal article" date="2003" name="Gene">
        <title>Molecular evolution and diversification of snake toxin genes, revealed by analysis of intron sequences.</title>
        <authorList>
            <person name="Fujimi T.J."/>
            <person name="Nakajyo T."/>
            <person name="Nishimura E."/>
            <person name="Ogura E."/>
            <person name="Tsuchiya T."/>
            <person name="Tamiya T."/>
        </authorList>
    </citation>
    <scope>NUCLEOTIDE SEQUENCE [GENOMIC DNA]</scope>
    <source>
        <tissue>Liver</tissue>
    </source>
</reference>
<reference key="3">
    <citation type="journal article" date="1972" name="Biochem. J.">
        <title>The isolation, properties and amino acid sequence of erabutoxin c, a minor neurotoxic component of the venom of a sea snake Katicauda semifasciata.</title>
        <authorList>
            <person name="Tamiya N."/>
            <person name="Abe H."/>
        </authorList>
    </citation>
    <scope>PROTEIN SEQUENCE OF 22-83</scope>
    <scope>TOXIC DOSE</scope>
    <scope>SUBCELLULAR LOCATION</scope>
</reference>
<reference key="4">
    <citation type="journal article" date="1977" name="Biochem. J.">
        <title>Correction of partial amino acid sequence of erabutoxins.</title>
        <authorList>
            <person name="Maeda N."/>
            <person name="Tamiya N."/>
        </authorList>
    </citation>
    <scope>SEQUENCE REVISION</scope>
</reference>
<reference key="5">
    <citation type="journal article" date="1995" name="J. Biol. Chem.">
        <title>Genetic engineering of snake toxins. The functional site of Erabutoxin a, as delineated by site-directed mutagenesis, includes variant residues.</title>
        <authorList>
            <person name="Tremeau O."/>
            <person name="Lemaire C."/>
            <person name="Drevet P."/>
            <person name="Pinkasfeld S."/>
            <person name="Ducancel F."/>
            <person name="Boulain J.-C."/>
            <person name="Menez A."/>
        </authorList>
    </citation>
    <scope>FUNCTION</scope>
</reference>
<protein>
    <recommendedName>
        <fullName evidence="4">Erabutoxin c</fullName>
        <shortName>ETXC</shortName>
        <shortName evidence="4">Ec</shortName>
    </recommendedName>
    <alternativeName>
        <fullName>Short neurotoxin 1c</fullName>
    </alternativeName>
</protein>
<name>3S1EC_LATSE</name>
<organism>
    <name type="scientific">Laticauda semifasciata</name>
    <name type="common">Black-banded sea krait</name>
    <name type="synonym">Pseudolaticauda semifasciata</name>
    <dbReference type="NCBI Taxonomy" id="8631"/>
    <lineage>
        <taxon>Eukaryota</taxon>
        <taxon>Metazoa</taxon>
        <taxon>Chordata</taxon>
        <taxon>Craniata</taxon>
        <taxon>Vertebrata</taxon>
        <taxon>Euteleostomi</taxon>
        <taxon>Lepidosauria</taxon>
        <taxon>Squamata</taxon>
        <taxon>Bifurcata</taxon>
        <taxon>Unidentata</taxon>
        <taxon>Episquamata</taxon>
        <taxon>Toxicofera</taxon>
        <taxon>Serpentes</taxon>
        <taxon>Colubroidea</taxon>
        <taxon>Elapidae</taxon>
        <taxon>Laticaudinae</taxon>
        <taxon>Laticauda</taxon>
    </lineage>
</organism>